<proteinExistence type="predicted"/>
<name>CTC_AQUAE</name>
<feature type="chain" id="PRO_0000181624" description="General stress protein CTC">
    <location>
        <begin position="1"/>
        <end position="151"/>
    </location>
</feature>
<feature type="region of interest" description="Disordered" evidence="1">
    <location>
        <begin position="131"/>
        <end position="151"/>
    </location>
</feature>
<gene>
    <name type="primary">ctc</name>
    <name type="ordered locus">aq_348</name>
</gene>
<keyword id="KW-1185">Reference proteome</keyword>
<evidence type="ECO:0000256" key="1">
    <source>
        <dbReference type="SAM" id="MobiDB-lite"/>
    </source>
</evidence>
<evidence type="ECO:0000269" key="2">
    <source>
    </source>
</evidence>
<evidence type="ECO:0000303" key="3">
    <source>
    </source>
</evidence>
<protein>
    <recommendedName>
        <fullName evidence="3">General stress protein CTC</fullName>
    </recommendedName>
</protein>
<comment type="function">
    <text evidence="2">Not known. A homolog of ribosomal protein bL25, it is missing the N-terminal domain which binds 5S rRNA. In vitro does not bind 5S rRNA.</text>
</comment>
<dbReference type="EMBL" id="AE000657">
    <property type="protein sequence ID" value="AAC06644.1"/>
    <property type="molecule type" value="Genomic_DNA"/>
</dbReference>
<dbReference type="PIR" id="B70331">
    <property type="entry name" value="B70331"/>
</dbReference>
<dbReference type="SMR" id="O66678"/>
<dbReference type="STRING" id="224324.aq_348"/>
<dbReference type="EnsemblBacteria" id="AAC06644">
    <property type="protein sequence ID" value="AAC06644"/>
    <property type="gene ID" value="aq_348"/>
</dbReference>
<dbReference type="eggNOG" id="COG1825">
    <property type="taxonomic scope" value="Bacteria"/>
</dbReference>
<dbReference type="HOGENOM" id="CLU_075939_2_1_0"/>
<dbReference type="InParanoid" id="O66678"/>
<dbReference type="Proteomes" id="UP000000798">
    <property type="component" value="Chromosome"/>
</dbReference>
<dbReference type="GO" id="GO:0022625">
    <property type="term" value="C:cytosolic large ribosomal subunit"/>
    <property type="evidence" value="ECO:0000318"/>
    <property type="project" value="GO_Central"/>
</dbReference>
<dbReference type="GO" id="GO:0003735">
    <property type="term" value="F:structural constituent of ribosome"/>
    <property type="evidence" value="ECO:0007669"/>
    <property type="project" value="InterPro"/>
</dbReference>
<dbReference type="GO" id="GO:0006412">
    <property type="term" value="P:translation"/>
    <property type="evidence" value="ECO:0000318"/>
    <property type="project" value="GO_Central"/>
</dbReference>
<dbReference type="CDD" id="cd00495">
    <property type="entry name" value="Ribosomal_L25_TL5_CTC"/>
    <property type="match status" value="1"/>
</dbReference>
<dbReference type="Gene3D" id="2.170.120.20">
    <property type="entry name" value="Ribosomal protein L25, beta domain"/>
    <property type="match status" value="1"/>
</dbReference>
<dbReference type="InterPro" id="IPR011035">
    <property type="entry name" value="Ribosomal_bL25/Gln-tRNA_synth"/>
</dbReference>
<dbReference type="InterPro" id="IPR020057">
    <property type="entry name" value="Ribosomal_bL25_b-dom"/>
</dbReference>
<dbReference type="InterPro" id="IPR037121">
    <property type="entry name" value="Ribosomal_bL25_C"/>
</dbReference>
<dbReference type="InterPro" id="IPR001021">
    <property type="entry name" value="Ribosomal_bL25_long"/>
</dbReference>
<dbReference type="InterPro" id="IPR029751">
    <property type="entry name" value="Ribosomal_L25_dom"/>
</dbReference>
<dbReference type="InterPro" id="IPR020930">
    <property type="entry name" value="Ribosomal_uL5_bac-type"/>
</dbReference>
<dbReference type="NCBIfam" id="TIGR00731">
    <property type="entry name" value="bL25_bact_ctc"/>
    <property type="match status" value="1"/>
</dbReference>
<dbReference type="PANTHER" id="PTHR33284">
    <property type="entry name" value="RIBOSOMAL PROTEIN L25/GLN-TRNA SYNTHETASE, ANTI-CODON-BINDING DOMAIN-CONTAINING PROTEIN"/>
    <property type="match status" value="1"/>
</dbReference>
<dbReference type="PANTHER" id="PTHR33284:SF1">
    <property type="entry name" value="RIBOSOMAL PROTEIN L25_GLN-TRNA SYNTHETASE, ANTI-CODON-BINDING DOMAIN-CONTAINING PROTEIN"/>
    <property type="match status" value="1"/>
</dbReference>
<dbReference type="Pfam" id="PF14693">
    <property type="entry name" value="Ribosomal_TL5_C"/>
    <property type="match status" value="1"/>
</dbReference>
<dbReference type="SUPFAM" id="SSF50715">
    <property type="entry name" value="Ribosomal protein L25-like"/>
    <property type="match status" value="1"/>
</dbReference>
<reference key="1">
    <citation type="journal article" date="1998" name="Nature">
        <title>The complete genome of the hyperthermophilic bacterium Aquifex aeolicus.</title>
        <authorList>
            <person name="Deckert G."/>
            <person name="Warren P.V."/>
            <person name="Gaasterland T."/>
            <person name="Young W.G."/>
            <person name="Lenox A.L."/>
            <person name="Graham D.E."/>
            <person name="Overbeek R."/>
            <person name="Snead M.A."/>
            <person name="Keller M."/>
            <person name="Aujay M."/>
            <person name="Huber R."/>
            <person name="Feldman R.A."/>
            <person name="Short J.M."/>
            <person name="Olsen G.J."/>
            <person name="Swanson R.V."/>
        </authorList>
    </citation>
    <scope>NUCLEOTIDE SEQUENCE [LARGE SCALE GENOMIC DNA]</scope>
    <source>
        <strain>VF5</strain>
    </source>
</reference>
<reference key="2">
    <citation type="journal article" date="2004" name="Biochemistry (Mosc.)">
        <title>General stress protein CTC from Bacillus subtilis specifically binds to ribosomal 5S RNA.</title>
        <authorList>
            <person name="Korepanov A.P."/>
            <person name="Gongadze G.M."/>
            <person name="Garber M.B."/>
        </authorList>
    </citation>
    <scope>DOES NOT BIND 5S RRNA</scope>
</reference>
<organism>
    <name type="scientific">Aquifex aeolicus (strain VF5)</name>
    <dbReference type="NCBI Taxonomy" id="224324"/>
    <lineage>
        <taxon>Bacteria</taxon>
        <taxon>Pseudomonadati</taxon>
        <taxon>Aquificota</taxon>
        <taxon>Aquificia</taxon>
        <taxon>Aquificales</taxon>
        <taxon>Aquificaceae</taxon>
        <taxon>Aquifex</taxon>
    </lineage>
</organism>
<accession>O66678</accession>
<sequence>MPHGEAFLIEAELDGETRVCLLKDIQFGWLGNNPIHIDLYDLSNVEEIEVEVPIEFVGTPAGVEAGGTFEPVMHTLTIKAPPAKIPEKIVVDVSGLGLGEALHVRDITPPEGCMILDNPEETVAVVYEPEEEVIGEEETGAEETGETEATS</sequence>